<dbReference type="EC" id="4.6.1.19" evidence="3"/>
<dbReference type="EMBL" id="AB002140">
    <property type="protein sequence ID" value="BAA32413.1"/>
    <property type="molecule type" value="mRNA"/>
</dbReference>
<dbReference type="PIR" id="S39930">
    <property type="entry name" value="S39930"/>
</dbReference>
<dbReference type="PDB" id="1IQQ">
    <property type="method" value="X-ray"/>
    <property type="resolution" value="1.50 A"/>
    <property type="chains" value="A=23-222"/>
</dbReference>
<dbReference type="PDBsum" id="1IQQ"/>
<dbReference type="SMR" id="O80323"/>
<dbReference type="iPTMnet" id="O80323"/>
<dbReference type="EvolutionaryTrace" id="O80323"/>
<dbReference type="GO" id="GO:0005576">
    <property type="term" value="C:extracellular region"/>
    <property type="evidence" value="ECO:0007669"/>
    <property type="project" value="TreeGrafter"/>
</dbReference>
<dbReference type="GO" id="GO:0033897">
    <property type="term" value="F:ribonuclease T2 activity"/>
    <property type="evidence" value="ECO:0007669"/>
    <property type="project" value="UniProtKB-EC"/>
</dbReference>
<dbReference type="GO" id="GO:0003723">
    <property type="term" value="F:RNA binding"/>
    <property type="evidence" value="ECO:0007669"/>
    <property type="project" value="InterPro"/>
</dbReference>
<dbReference type="GO" id="GO:0006401">
    <property type="term" value="P:RNA catabolic process"/>
    <property type="evidence" value="ECO:0007669"/>
    <property type="project" value="TreeGrafter"/>
</dbReference>
<dbReference type="CDD" id="cd01061">
    <property type="entry name" value="RNase_T2_euk"/>
    <property type="match status" value="1"/>
</dbReference>
<dbReference type="Gene3D" id="3.90.730.10">
    <property type="entry name" value="Ribonuclease T2-like"/>
    <property type="match status" value="1"/>
</dbReference>
<dbReference type="InterPro" id="IPR033697">
    <property type="entry name" value="Ribonuclease_T2_eukaryotic"/>
</dbReference>
<dbReference type="InterPro" id="IPR001568">
    <property type="entry name" value="RNase_T2-like"/>
</dbReference>
<dbReference type="InterPro" id="IPR036430">
    <property type="entry name" value="RNase_T2-like_sf"/>
</dbReference>
<dbReference type="InterPro" id="IPR018188">
    <property type="entry name" value="RNase_T2_His_AS_1"/>
</dbReference>
<dbReference type="PANTHER" id="PTHR11240:SF75">
    <property type="entry name" value="RIBONUCLEASE 3"/>
    <property type="match status" value="1"/>
</dbReference>
<dbReference type="PANTHER" id="PTHR11240">
    <property type="entry name" value="RIBONUCLEASE T2"/>
    <property type="match status" value="1"/>
</dbReference>
<dbReference type="Pfam" id="PF00445">
    <property type="entry name" value="Ribonuclease_T2"/>
    <property type="match status" value="1"/>
</dbReference>
<dbReference type="SUPFAM" id="SSF55895">
    <property type="entry name" value="Ribonuclease Rh-like"/>
    <property type="match status" value="1"/>
</dbReference>
<dbReference type="PROSITE" id="PS00530">
    <property type="entry name" value="RNASE_T2_1"/>
    <property type="match status" value="1"/>
</dbReference>
<feature type="signal peptide" evidence="6">
    <location>
        <begin position="1"/>
        <end position="22"/>
    </location>
</feature>
<feature type="chain" id="PRO_0000030979" description="Ribonuclease S-3">
    <location>
        <begin position="23"/>
        <end position="222"/>
    </location>
</feature>
<feature type="active site" description="Proton donor" evidence="3 5">
    <location>
        <position position="55"/>
    </location>
</feature>
<feature type="active site" evidence="5">
    <location>
        <position position="106"/>
    </location>
</feature>
<feature type="active site" evidence="5">
    <location>
        <position position="109"/>
    </location>
</feature>
<feature type="active site" description="Proton acceptor" evidence="3 5">
    <location>
        <position position="110"/>
    </location>
</feature>
<feature type="binding site" evidence="1">
    <location>
        <position position="31"/>
    </location>
    <ligand>
        <name>RNA</name>
        <dbReference type="ChEBI" id="CHEBI:33697"/>
    </ligand>
    <ligandPart>
        <name>a 3'-terminal ribonucleotide 3'-phosphate residue</name>
        <dbReference type="ChEBI" id="CHEBI:83062"/>
    </ligandPart>
</feature>
<feature type="binding site" evidence="1">
    <location>
        <position position="55"/>
    </location>
    <ligand>
        <name>RNA</name>
        <dbReference type="ChEBI" id="CHEBI:33697"/>
    </ligand>
    <ligandPart>
        <name>a 3'-terminal ribonucleotide 3'-phosphate residue</name>
        <dbReference type="ChEBI" id="CHEBI:83062"/>
    </ligandPart>
</feature>
<feature type="binding site" evidence="1">
    <location>
        <begin position="92"/>
        <end position="93"/>
    </location>
    <ligand>
        <name>RNA</name>
        <dbReference type="ChEBI" id="CHEBI:33697"/>
    </ligand>
    <ligandPart>
        <name>a 3'-terminal ribonucleotide 3'-phosphate residue</name>
        <dbReference type="ChEBI" id="CHEBI:83062"/>
    </ligandPart>
</feature>
<feature type="binding site" evidence="1">
    <location>
        <position position="102"/>
    </location>
    <ligand>
        <name>RNA</name>
        <dbReference type="ChEBI" id="CHEBI:33697"/>
    </ligand>
    <ligandPart>
        <name>a 3'-terminal ribonucleotide 3'-phosphate residue</name>
        <dbReference type="ChEBI" id="CHEBI:83062"/>
    </ligandPart>
</feature>
<feature type="binding site" evidence="1">
    <location>
        <begin position="105"/>
        <end position="106"/>
    </location>
    <ligand>
        <name>RNA</name>
        <dbReference type="ChEBI" id="CHEBI:33697"/>
    </ligand>
    <ligandPart>
        <name>a 3'-terminal ribonucleotide 3'-phosphate residue</name>
        <dbReference type="ChEBI" id="CHEBI:83062"/>
    </ligandPart>
</feature>
<feature type="binding site" evidence="1">
    <location>
        <begin position="109"/>
        <end position="110"/>
    </location>
    <ligand>
        <name>RNA</name>
        <dbReference type="ChEBI" id="CHEBI:33697"/>
    </ligand>
    <ligandPart>
        <name>a 3'-terminal ribonucleotide 3'-phosphate residue</name>
        <dbReference type="ChEBI" id="CHEBI:83062"/>
    </ligandPart>
</feature>
<feature type="glycosylation site" description="N-linked (GlcNAc...) asparagine" evidence="2 4">
    <location>
        <position position="40"/>
    </location>
</feature>
<feature type="glycosylation site" description="N-linked (GlcNAc...) asparagine" evidence="2 4 5 8">
    <location>
        <position position="138"/>
    </location>
</feature>
<feature type="disulfide bond" evidence="5 8">
    <location>
        <begin position="37"/>
        <end position="44"/>
    </location>
</feature>
<feature type="disulfide bond" evidence="5 8">
    <location>
        <begin position="70"/>
        <end position="113"/>
    </location>
</feature>
<feature type="disulfide bond" evidence="5 8">
    <location>
        <begin position="177"/>
        <end position="215"/>
    </location>
</feature>
<feature type="disulfide bond" evidence="5 8">
    <location>
        <begin position="192"/>
        <end position="203"/>
    </location>
</feature>
<feature type="strand" evidence="9">
    <location>
        <begin position="25"/>
        <end position="32"/>
    </location>
</feature>
<feature type="helix" evidence="9">
    <location>
        <begin position="33"/>
        <end position="36"/>
    </location>
</feature>
<feature type="strand" evidence="9">
    <location>
        <begin position="39"/>
        <end position="42"/>
    </location>
</feature>
<feature type="strand" evidence="9">
    <location>
        <begin position="50"/>
        <end position="60"/>
    </location>
</feature>
<feature type="strand" evidence="9">
    <location>
        <begin position="62"/>
        <end position="65"/>
    </location>
</feature>
<feature type="helix" evidence="9">
    <location>
        <begin position="80"/>
        <end position="89"/>
    </location>
</feature>
<feature type="helix" evidence="9">
    <location>
        <begin position="96"/>
        <end position="98"/>
    </location>
</feature>
<feature type="helix" evidence="9">
    <location>
        <begin position="99"/>
        <end position="109"/>
    </location>
</feature>
<feature type="helix" evidence="9">
    <location>
        <begin position="111"/>
        <end position="113"/>
    </location>
</feature>
<feature type="turn" evidence="9">
    <location>
        <begin position="115"/>
        <end position="117"/>
    </location>
</feature>
<feature type="helix" evidence="9">
    <location>
        <begin position="121"/>
        <end position="132"/>
    </location>
</feature>
<feature type="turn" evidence="9">
    <location>
        <begin position="133"/>
        <end position="135"/>
    </location>
</feature>
<feature type="helix" evidence="9">
    <location>
        <begin position="139"/>
        <end position="145"/>
    </location>
</feature>
<feature type="strand" evidence="9">
    <location>
        <begin position="153"/>
        <end position="155"/>
    </location>
</feature>
<feature type="helix" evidence="9">
    <location>
        <begin position="157"/>
        <end position="165"/>
    </location>
</feature>
<feature type="turn" evidence="9">
    <location>
        <begin position="166"/>
        <end position="170"/>
    </location>
</feature>
<feature type="strand" evidence="9">
    <location>
        <begin position="174"/>
        <end position="180"/>
    </location>
</feature>
<feature type="strand" evidence="9">
    <location>
        <begin position="183"/>
        <end position="193"/>
    </location>
</feature>
<feature type="strand" evidence="9">
    <location>
        <begin position="197"/>
        <end position="201"/>
    </location>
</feature>
<feature type="strand" evidence="9">
    <location>
        <begin position="220"/>
        <end position="222"/>
    </location>
</feature>
<accession>O80323</accession>
<protein>
    <recommendedName>
        <fullName>Ribonuclease S-3</fullName>
        <ecNumber evidence="3">4.6.1.19</ecNumber>
    </recommendedName>
    <alternativeName>
        <fullName>S3-RNase</fullName>
    </alternativeName>
</protein>
<sequence length="222" mass="25747">MVHVVMMVFLLIVLILCSSTVGYDYFQFTQQYQLAVCNSNRTLCKDPPDKLFTVHGLWPSNMVGPDPSKCPIKNIRKREKLLEHQLEIIWPNVFDRTKNNLFWDKEWMKHGSCGYPTIDNENHYFETVIKMYISKKQNVSRILSKAKIEPDGKKRALLDIENAIRNGADNKKPKLKCQKKGTTTELVEITLCSDKSGEHFIDCPHPFEPISPHYCPTNNIKY</sequence>
<evidence type="ECO:0000250" key="1">
    <source>
        <dbReference type="UniProtKB" id="P23540"/>
    </source>
</evidence>
<evidence type="ECO:0000255" key="2">
    <source>
        <dbReference type="PROSITE-ProRule" id="PRU00498"/>
    </source>
</evidence>
<evidence type="ECO:0000255" key="3">
    <source>
        <dbReference type="PROSITE-ProRule" id="PRU10045"/>
    </source>
</evidence>
<evidence type="ECO:0000269" key="4">
    <source>
    </source>
</evidence>
<evidence type="ECO:0000269" key="5">
    <source>
    </source>
</evidence>
<evidence type="ECO:0000269" key="6">
    <source>
    </source>
</evidence>
<evidence type="ECO:0000305" key="7"/>
<evidence type="ECO:0007744" key="8">
    <source>
        <dbReference type="PDB" id="1IQQ"/>
    </source>
</evidence>
<evidence type="ECO:0007829" key="9">
    <source>
        <dbReference type="PDB" id="1IQQ"/>
    </source>
</evidence>
<proteinExistence type="evidence at protein level"/>
<keyword id="KW-0002">3D-structure</keyword>
<keyword id="KW-0903">Direct protein sequencing</keyword>
<keyword id="KW-1015">Disulfide bond</keyword>
<keyword id="KW-0255">Endonuclease</keyword>
<keyword id="KW-0325">Glycoprotein</keyword>
<keyword id="KW-0378">Hydrolase</keyword>
<keyword id="KW-0456">Lyase</keyword>
<keyword id="KW-0540">Nuclease</keyword>
<keyword id="KW-0732">Signal</keyword>
<comment type="function">
    <text>Self-incompatibility (SI) is the inherited ability of a flowering plant to prevent self-fertilization by discriminating between self and non-self pollen during pollination. In many species, self-incompatibility is controlled by the single, multiallelic locus S.</text>
</comment>
<comment type="catalytic activity">
    <reaction evidence="3">
        <text>a ribonucleotidyl-ribonucleotide-RNA + H2O = a 3'-end 3'-phospho-ribonucleotide-RNA + a 5'-end dephospho-ribonucleoside-RNA + H(+)</text>
        <dbReference type="Rhea" id="RHEA:68052"/>
        <dbReference type="Rhea" id="RHEA-COMP:10463"/>
        <dbReference type="Rhea" id="RHEA-COMP:13936"/>
        <dbReference type="Rhea" id="RHEA-COMP:17355"/>
        <dbReference type="ChEBI" id="CHEBI:15377"/>
        <dbReference type="ChEBI" id="CHEBI:15378"/>
        <dbReference type="ChEBI" id="CHEBI:83062"/>
        <dbReference type="ChEBI" id="CHEBI:138284"/>
        <dbReference type="ChEBI" id="CHEBI:173118"/>
        <dbReference type="EC" id="4.6.1.19"/>
    </reaction>
</comment>
<comment type="PTM">
    <text evidence="4">N-linked core structure at Asn-138 contains xylose.</text>
</comment>
<comment type="similarity">
    <text evidence="7">Belongs to the RNase T2 family.</text>
</comment>
<reference key="1">
    <citation type="journal article" date="1998" name="Plant Mol. Biol.">
        <title>Primary structural features of rosaceous S-RNases associated with gametophytic self-incompatibility.</title>
        <authorList>
            <person name="Ishimizu T."/>
            <person name="Shinkawa T."/>
            <person name="Sakiyama F."/>
            <person name="Norioka S."/>
        </authorList>
    </citation>
    <scope>NUCLEOTIDE SEQUENCE [MRNA]</scope>
    <scope>PARTIAL PROTEIN SEQUENCE</scope>
    <source>
        <strain>cv. Hosui</strain>
        <tissue>Style</tissue>
    </source>
</reference>
<reference key="2">
    <citation type="journal article" date="1993" name="Mol. Gen. Genet.">
        <title>Identification and characterization of stylar glycoproteins associated with self-incompatibility genes of Japanese pear, Pyrus serotina Rehd.</title>
        <authorList>
            <person name="Sassa H."/>
            <person name="Hirano H."/>
            <person name="Ikehashi H."/>
        </authorList>
    </citation>
    <scope>PROTEIN SEQUENCE OF 23-36</scope>
</reference>
<reference key="3">
    <citation type="journal article" date="1999" name="Eur. J. Biochem.">
        <title>Presence of asparagine-linked N-acetylglucosamine and chitobiose in Pyrus pyrifolia S-RNases associated with gametophytic self-incompatibility.</title>
        <authorList>
            <person name="Ishimizu T."/>
            <person name="Mitsukami Y."/>
            <person name="Shinkawa T."/>
            <person name="Natsuka S."/>
            <person name="Hase S."/>
            <person name="Miyagi M."/>
            <person name="Sakiyama F."/>
            <person name="Norioka S."/>
        </authorList>
    </citation>
    <scope>GLYCOSYLATION AT ASN-40 AND ASN-138</scope>
    <scope>STRUCTURE OF CARBOHYDRATES</scope>
    <source>
        <strain>cv. Hosui</strain>
        <tissue>Style</tissue>
    </source>
</reference>
<reference key="4">
    <citation type="journal article" date="2001" name="J. Biol. Chem.">
        <title>Crystal structure at 1.5-A resolution of Pyrus pyrifolia pistil ribonuclease responsible for gametophytic self-incompatibility.</title>
        <authorList>
            <person name="Matsuura T."/>
            <person name="Sakai H."/>
            <person name="Unno M."/>
            <person name="Ida K."/>
            <person name="Sato M."/>
            <person name="Sakiyama F."/>
            <person name="Norioka S."/>
        </authorList>
    </citation>
    <scope>X-RAY CRYSTALLOGRAPHY (1.50 ANGSTROMS) OF 23-222</scope>
    <scope>GLYCOSYLATION AT ASN-138</scope>
    <scope>DISULFIDE BONDS</scope>
</reference>
<organism>
    <name type="scientific">Pyrus pyrifolia</name>
    <name type="common">Chinese pear</name>
    <name type="synonym">Pyrus serotina</name>
    <dbReference type="NCBI Taxonomy" id="3767"/>
    <lineage>
        <taxon>Eukaryota</taxon>
        <taxon>Viridiplantae</taxon>
        <taxon>Streptophyta</taxon>
        <taxon>Embryophyta</taxon>
        <taxon>Tracheophyta</taxon>
        <taxon>Spermatophyta</taxon>
        <taxon>Magnoliopsida</taxon>
        <taxon>eudicotyledons</taxon>
        <taxon>Gunneridae</taxon>
        <taxon>Pentapetalae</taxon>
        <taxon>rosids</taxon>
        <taxon>fabids</taxon>
        <taxon>Rosales</taxon>
        <taxon>Rosaceae</taxon>
        <taxon>Amygdaloideae</taxon>
        <taxon>Maleae</taxon>
        <taxon>Pyrus</taxon>
    </lineage>
</organism>
<name>RNS3_PYRPY</name>